<organism>
    <name type="scientific">Saccharomyces cerevisiae (strain ATCC 204508 / S288c)</name>
    <name type="common">Baker's yeast</name>
    <dbReference type="NCBI Taxonomy" id="559292"/>
    <lineage>
        <taxon>Eukaryota</taxon>
        <taxon>Fungi</taxon>
        <taxon>Dikarya</taxon>
        <taxon>Ascomycota</taxon>
        <taxon>Saccharomycotina</taxon>
        <taxon>Saccharomycetes</taxon>
        <taxon>Saccharomycetales</taxon>
        <taxon>Saccharomycetaceae</taxon>
        <taxon>Saccharomyces</taxon>
    </lineage>
</organism>
<proteinExistence type="evidence at protein level"/>
<sequence length="332" mass="35747">MVRVAINGFGRIGRLVMRIALSRPNVEVVALNDPFITNDYAAYMFKYDSTHGRYAGEVSHDDKHIIVDGKKIATYQERDPANLPWGSSNVDIAIDSTGVFKELDTAQKHIDAGAKKVVITAPSSTAPMFVMGVNEEKYTSDLKIVSNASCTTNCLAPLAKVINDAFGIEEGLMTTVHSLTATQKTVDGPSHKDWRGGRTASGNIIPSSTGAAKAVGKVLPELQGKLTGMAFRVPTVDVSVVDLTVKLNKETTYDEIKKVVKAAAEGKLKGVLGYTEDAVVSSDFLGDSHSSIFDASAGIQLSPKFVKLVSWYDNEYGYSTRVVDLVEHVAKA</sequence>
<comment type="function">
    <text evidence="10 12">Glyceraldehyde-3-phosphate dehydrogenase (GAPDH) involved in glycolysis and gluconeogenesis (PubMed:2999100). Catalyzes the reaction of glyceraldehyde-3-phosphate to 1,3 bis-phosphoglycerate (PubMed:3905788). The contribution of the TDH1, TDH2, and TDH3 to the total glyceraldehyde-3-phosphate dehydrogenase activity is 10-15, 25-30, and 50-60%, respectively (PubMed:3905788).</text>
</comment>
<comment type="function">
    <text evidence="6 13">As a side activity, catalyzes the hydration of the nicotinamide ring of NADH or NADPH at the C6 position to give the corresponding hydrates, NADHX and NADPHX, which exist as R and S epimers, that cannot act as electron donors or acceptors and inhibit several dehydrogenases, making them toxic.</text>
</comment>
<comment type="catalytic activity">
    <reaction evidence="12">
        <text>D-glyceraldehyde 3-phosphate + phosphate + NAD(+) = (2R)-3-phospho-glyceroyl phosphate + NADH + H(+)</text>
        <dbReference type="Rhea" id="RHEA:10300"/>
        <dbReference type="ChEBI" id="CHEBI:15378"/>
        <dbReference type="ChEBI" id="CHEBI:43474"/>
        <dbReference type="ChEBI" id="CHEBI:57540"/>
        <dbReference type="ChEBI" id="CHEBI:57604"/>
        <dbReference type="ChEBI" id="CHEBI:57945"/>
        <dbReference type="ChEBI" id="CHEBI:59776"/>
        <dbReference type="EC" id="1.2.1.12"/>
    </reaction>
    <physiologicalReaction direction="left-to-right" evidence="12">
        <dbReference type="Rhea" id="RHEA:10301"/>
    </physiologicalReaction>
</comment>
<comment type="catalytic activity">
    <reaction evidence="6 13">
        <text>NADH + H2O = (6R)-NADHX</text>
        <dbReference type="Rhea" id="RHEA:57360"/>
        <dbReference type="ChEBI" id="CHEBI:15377"/>
        <dbReference type="ChEBI" id="CHEBI:57945"/>
        <dbReference type="ChEBI" id="CHEBI:64075"/>
    </reaction>
    <physiologicalReaction direction="left-to-right" evidence="6 13">
        <dbReference type="Rhea" id="RHEA:57361"/>
    </physiologicalReaction>
</comment>
<comment type="catalytic activity">
    <reaction evidence="6 13">
        <text>NADH + H2O = (6S)-NADHX</text>
        <dbReference type="Rhea" id="RHEA:57364"/>
        <dbReference type="ChEBI" id="CHEBI:15377"/>
        <dbReference type="ChEBI" id="CHEBI:57945"/>
        <dbReference type="ChEBI" id="CHEBI:64074"/>
    </reaction>
    <physiologicalReaction direction="left-to-right" evidence="6 13">
        <dbReference type="Rhea" id="RHEA:57365"/>
    </physiologicalReaction>
</comment>
<comment type="catalytic activity">
    <reaction evidence="6 13">
        <text>NADPH + H2O = (6R)-NADPHX</text>
        <dbReference type="Rhea" id="RHEA:57368"/>
        <dbReference type="ChEBI" id="CHEBI:15377"/>
        <dbReference type="ChEBI" id="CHEBI:57783"/>
        <dbReference type="ChEBI" id="CHEBI:64077"/>
    </reaction>
    <physiologicalReaction direction="left-to-right" evidence="6 13">
        <dbReference type="Rhea" id="RHEA:57369"/>
    </physiologicalReaction>
</comment>
<comment type="catalytic activity">
    <reaction evidence="6 13">
        <text>NADPH + H2O = (6S)-NADPHX</text>
        <dbReference type="Rhea" id="RHEA:57372"/>
        <dbReference type="ChEBI" id="CHEBI:15377"/>
        <dbReference type="ChEBI" id="CHEBI:57783"/>
        <dbReference type="ChEBI" id="CHEBI:64076"/>
    </reaction>
    <physiologicalReaction direction="left-to-right" evidence="6 13">
        <dbReference type="Rhea" id="RHEA:57373"/>
    </physiologicalReaction>
</comment>
<comment type="biophysicochemical properties">
    <kinetics>
        <KM evidence="16">0.32 uM for NAD(+)</KM>
    </kinetics>
</comment>
<comment type="pathway">
    <text evidence="12">Carbohydrate degradation; glycolysis; pyruvate from D-glyceraldehyde 3-phosphate: step 1/5.</text>
</comment>
<comment type="subunit">
    <text evidence="9 12">Homotetramer.</text>
</comment>
<comment type="subcellular location">
    <subcellularLocation>
        <location evidence="4">Cytoplasm</location>
    </subcellularLocation>
    <subcellularLocation>
        <location evidence="8">Mitochondrion</location>
    </subcellularLocation>
</comment>
<comment type="induction">
    <text evidence="14">Expression is not affected by a heat shock.</text>
</comment>
<comment type="PTM">
    <text evidence="11">Conjugated to URM1, a ubiquitin-like protein, in response to oxidative stresses. The attachment of URM1 to lysine residues exclusively depends on the presence of a peroxidatic cysteine in the target protein, with low specificity for the particular residue, motif, or structural context at which urmylation can occur. The URM1-conjugation reaction is mechanistically and directly coupled to the process of cysteine persulfidation, transfering the sulfur atom of the URM1 thiocarboxyl group to redox-active cysteine residues in the target protein if it is exposed to oxidative conditions.</text>
</comment>
<comment type="PTM">
    <text evidence="18">Persulfidated on specific redox-active cysteine residues. Persulfidation (also called protein S-sulfhydration) may provide a molecular mechanism that enables cells to protect vulnerable cysteine residues from reactive oxygen species (ROS) under stress conditions.</text>
</comment>
<comment type="disruption phenotype">
    <text evidence="10">Does not affect growth when ethanol is used as carbon source but reduces growth when glucose is used as carbon source.</text>
</comment>
<comment type="miscellaneous">
    <text evidence="7">Present with 169000 molecules/cell in log phase SD medium.</text>
</comment>
<comment type="similarity">
    <text evidence="17">Belongs to the glyceraldehyde-3-phosphate dehydrogenase family.</text>
</comment>
<keyword id="KW-0002">3D-structure</keyword>
<keyword id="KW-0963">Cytoplasm</keyword>
<keyword id="KW-0903">Direct protein sequencing</keyword>
<keyword id="KW-0324">Glycolysis</keyword>
<keyword id="KW-1017">Isopeptide bond</keyword>
<keyword id="KW-0496">Mitochondrion</keyword>
<keyword id="KW-0520">NAD</keyword>
<keyword id="KW-0560">Oxidoreductase</keyword>
<keyword id="KW-0597">Phosphoprotein</keyword>
<keyword id="KW-1185">Reference proteome</keyword>
<keyword id="KW-0832">Ubl conjugation</keyword>
<name>G3P3_YEAST</name>
<reference key="1">
    <citation type="journal article" date="1979" name="J. Biol. Chem.">
        <title>The primary structure of a glyceraldehyde-3-phosphate dehydrogenase gene from Saccharomyces cerevisiae.</title>
        <authorList>
            <person name="Holland J.P."/>
            <person name="Holland M.J."/>
        </authorList>
    </citation>
    <scope>NUCLEOTIDE SEQUENCE [GENOMIC DNA]</scope>
</reference>
<reference key="2">
    <citation type="journal article" date="1995" name="Yeast">
        <title>The complete sequence of a 9037 bp DNA fragment of the right arm of Saccharomyces cerevisiae chromosome VII.</title>
        <authorList>
            <person name="Arroyo J."/>
            <person name="Garcia-Gonzalez M."/>
            <person name="Garcia-Saez M.I."/>
            <person name="Sanchez M."/>
            <person name="Nombela C."/>
        </authorList>
    </citation>
    <scope>NUCLEOTIDE SEQUENCE [GENOMIC DNA]</scope>
    <source>
        <strain>ATCC 204508 / S288c</strain>
    </source>
</reference>
<reference key="3">
    <citation type="journal article" date="1997" name="Nature">
        <title>The nucleotide sequence of Saccharomyces cerevisiae chromosome VII.</title>
        <authorList>
            <person name="Tettelin H."/>
            <person name="Agostoni-Carbone M.L."/>
            <person name="Albermann K."/>
            <person name="Albers M."/>
            <person name="Arroyo J."/>
            <person name="Backes U."/>
            <person name="Barreiros T."/>
            <person name="Bertani I."/>
            <person name="Bjourson A.J."/>
            <person name="Brueckner M."/>
            <person name="Bruschi C.V."/>
            <person name="Carignani G."/>
            <person name="Castagnoli L."/>
            <person name="Cerdan E."/>
            <person name="Clemente M.L."/>
            <person name="Coblenz A."/>
            <person name="Coglievina M."/>
            <person name="Coissac E."/>
            <person name="Defoor E."/>
            <person name="Del Bino S."/>
            <person name="Delius H."/>
            <person name="Delneri D."/>
            <person name="de Wergifosse P."/>
            <person name="Dujon B."/>
            <person name="Durand P."/>
            <person name="Entian K.-D."/>
            <person name="Eraso P."/>
            <person name="Escribano V."/>
            <person name="Fabiani L."/>
            <person name="Fartmann B."/>
            <person name="Feroli F."/>
            <person name="Feuermann M."/>
            <person name="Frontali L."/>
            <person name="Garcia-Gonzalez M."/>
            <person name="Garcia-Saez M.I."/>
            <person name="Goffeau A."/>
            <person name="Guerreiro P."/>
            <person name="Hani J."/>
            <person name="Hansen M."/>
            <person name="Hebling U."/>
            <person name="Hernandez K."/>
            <person name="Heumann K."/>
            <person name="Hilger F."/>
            <person name="Hofmann B."/>
            <person name="Indge K.J."/>
            <person name="James C.M."/>
            <person name="Klima R."/>
            <person name="Koetter P."/>
            <person name="Kramer B."/>
            <person name="Kramer W."/>
            <person name="Lauquin G."/>
            <person name="Leuther H."/>
            <person name="Louis E.J."/>
            <person name="Maillier E."/>
            <person name="Marconi A."/>
            <person name="Martegani E."/>
            <person name="Mazon M.J."/>
            <person name="Mazzoni C."/>
            <person name="McReynolds A.D.K."/>
            <person name="Melchioretto P."/>
            <person name="Mewes H.-W."/>
            <person name="Minenkova O."/>
            <person name="Mueller-Auer S."/>
            <person name="Nawrocki A."/>
            <person name="Netter P."/>
            <person name="Neu R."/>
            <person name="Nombela C."/>
            <person name="Oliver S.G."/>
            <person name="Panzeri L."/>
            <person name="Paoluzi S."/>
            <person name="Plevani P."/>
            <person name="Portetelle D."/>
            <person name="Portillo F."/>
            <person name="Potier S."/>
            <person name="Purnelle B."/>
            <person name="Rieger M."/>
            <person name="Riles L."/>
            <person name="Rinaldi T."/>
            <person name="Robben J."/>
            <person name="Rodrigues-Pousada C."/>
            <person name="Rodriguez-Belmonte E."/>
            <person name="Rodriguez-Torres A.M."/>
            <person name="Rose M."/>
            <person name="Ruzzi M."/>
            <person name="Saliola M."/>
            <person name="Sanchez-Perez M."/>
            <person name="Schaefer B."/>
            <person name="Schaefer M."/>
            <person name="Scharfe M."/>
            <person name="Schmidheini T."/>
            <person name="Schreer A."/>
            <person name="Skala J."/>
            <person name="Souciet J.-L."/>
            <person name="Steensma H.Y."/>
            <person name="Talla E."/>
            <person name="Thierry A."/>
            <person name="Vandenbol M."/>
            <person name="van der Aart Q.J.M."/>
            <person name="Van Dyck L."/>
            <person name="Vanoni M."/>
            <person name="Verhasselt P."/>
            <person name="Voet M."/>
            <person name="Volckaert G."/>
            <person name="Wambutt R."/>
            <person name="Watson M.D."/>
            <person name="Weber N."/>
            <person name="Wedler E."/>
            <person name="Wedler H."/>
            <person name="Wipfli P."/>
            <person name="Wolf K."/>
            <person name="Wright L.F."/>
            <person name="Zaccaria P."/>
            <person name="Zimmermann M."/>
            <person name="Zollner A."/>
            <person name="Kleine K."/>
        </authorList>
    </citation>
    <scope>NUCLEOTIDE SEQUENCE [LARGE SCALE GENOMIC DNA]</scope>
    <source>
        <strain>ATCC 204508 / S288c</strain>
    </source>
</reference>
<reference key="4">
    <citation type="journal article" date="2014" name="G3 (Bethesda)">
        <title>The reference genome sequence of Saccharomyces cerevisiae: Then and now.</title>
        <authorList>
            <person name="Engel S.R."/>
            <person name="Dietrich F.S."/>
            <person name="Fisk D.G."/>
            <person name="Binkley G."/>
            <person name="Balakrishnan R."/>
            <person name="Costanzo M.C."/>
            <person name="Dwight S.S."/>
            <person name="Hitz B.C."/>
            <person name="Karra K."/>
            <person name="Nash R.S."/>
            <person name="Weng S."/>
            <person name="Wong E.D."/>
            <person name="Lloyd P."/>
            <person name="Skrzypek M.S."/>
            <person name="Miyasato S.R."/>
            <person name="Simison M."/>
            <person name="Cherry J.M."/>
        </authorList>
    </citation>
    <scope>GENOME REANNOTATION</scope>
    <source>
        <strain>ATCC 204508 / S288c</strain>
    </source>
</reference>
<reference key="5">
    <citation type="journal article" date="2007" name="Genome Res.">
        <title>Approaching a complete repository of sequence-verified protein-encoding clones for Saccharomyces cerevisiae.</title>
        <authorList>
            <person name="Hu Y."/>
            <person name="Rolfs A."/>
            <person name="Bhullar B."/>
            <person name="Murthy T.V.S."/>
            <person name="Zhu C."/>
            <person name="Berger M.F."/>
            <person name="Camargo A.A."/>
            <person name="Kelley F."/>
            <person name="McCarron S."/>
            <person name="Jepson D."/>
            <person name="Richardson A."/>
            <person name="Raphael J."/>
            <person name="Moreira D."/>
            <person name="Taycher E."/>
            <person name="Zuo D."/>
            <person name="Mohr S."/>
            <person name="Kane M.F."/>
            <person name="Williamson J."/>
            <person name="Simpson A.J.G."/>
            <person name="Bulyk M.L."/>
            <person name="Harlow E."/>
            <person name="Marsischky G."/>
            <person name="Kolodner R.D."/>
            <person name="LaBaer J."/>
        </authorList>
    </citation>
    <scope>NUCLEOTIDE SEQUENCE [GENOMIC DNA]</scope>
    <source>
        <strain>ATCC 204508 / S288c</strain>
    </source>
</reference>
<reference key="6">
    <citation type="journal article" date="1972" name="FEBS Lett.">
        <title>Glyceraldehyde 3-phosphate dehydrogenase: Amino acid sequence of enzyme from baker's yeast.</title>
        <authorList>
            <person name="Jones G.M."/>
            <person name="Harris J.I."/>
        </authorList>
    </citation>
    <scope>PARTIAL PROTEIN SEQUENCE OF 2-332</scope>
    <scope>CLEAVAGE OF INITIATOR METHIONINE</scope>
</reference>
<reference key="7">
    <citation type="journal article" date="1994" name="Electrophoresis">
        <title>Protein identifications for a Saccharomyces cerevisiae protein database.</title>
        <authorList>
            <person name="Garrels J.I."/>
            <person name="Futcher B."/>
            <person name="Kobayashi R."/>
            <person name="Latter G.I."/>
            <person name="Schwender B."/>
            <person name="Volpe T."/>
            <person name="Warner J.R."/>
            <person name="McLaughlin C.S."/>
        </authorList>
    </citation>
    <scope>PROTEIN SEQUENCE OF 47-58</scope>
    <source>
        <strain>ATCC 204508 / S288c</strain>
    </source>
</reference>
<reference key="8">
    <citation type="journal article" date="1995" name="Electrophoresis">
        <title>Gene linkage of two-dimensional polyacrylamide gel electrophoresis resolved proteins from isogene families in Saccharomyces cerevisiae by microsequencing of in-gel trypsin generated peptides.</title>
        <authorList>
            <person name="Norbeck J."/>
            <person name="Blomberg A."/>
        </authorList>
    </citation>
    <scope>PARTIAL PROTEIN SEQUENCE</scope>
    <source>
        <strain>ATCC 38531 / Y41</strain>
        <strain>ATCC 44827 / SKQ2N</strain>
    </source>
</reference>
<reference key="9">
    <citation type="journal article" date="1954" name="J. Biol. Chem.">
        <title>The action of glyceraldehyde-3-phosphate dehydrogenase on reduced diphosphopyridine nucleotide.</title>
        <authorList>
            <person name="Rafter G.W."/>
            <person name="Chaykin S."/>
            <person name="Krebs E.G."/>
        </authorList>
    </citation>
    <scope>FUNCTION</scope>
    <scope>CATALYTIC ACTIVITY</scope>
</reference>
<reference key="10">
    <citation type="journal article" date="1974" name="Biochemistry">
        <title>Glyceraldehyde-3-phosphate dehydrogenase catalyzed hydration of the 5-6 double bond of reduced beta-nicotinamide adenine dinucleotide (betaNADH). Formation of beta-6-hydroxy-1,4,5,6-tetrahydronicotinamide adenine dinucleotide.</title>
        <authorList>
            <person name="Oppenheimer N.J."/>
            <person name="Kaplan N.O."/>
        </authorList>
    </citation>
    <scope>FUNCTION</scope>
    <scope>CATALYTIC ACTIVITY</scope>
</reference>
<reference key="11">
    <citation type="journal article" date="1985" name="J. Biol. Chem.">
        <title>Isolation and characterization of yeast strains carrying mutations in the glyceraldehyde-3-phosphate dehydrogenase genes.</title>
        <authorList>
            <person name="McAlister L."/>
            <person name="Holland M.J."/>
        </authorList>
    </citation>
    <scope>FUNCTION</scope>
    <scope>DISRUPTION PHENOTYPE</scope>
</reference>
<reference key="12">
    <citation type="journal article" date="1985" name="J. Biol. Chem.">
        <title>Differential expression of the three yeast glyceraldehyde-3-phosphate dehydrogenase genes.</title>
        <authorList>
            <person name="McAlister L."/>
            <person name="Holland M.J."/>
        </authorList>
    </citation>
    <scope>FUNCTION</scope>
    <scope>SUBUNIT</scope>
    <scope>CATALYTIC ACTIVITY</scope>
    <scope>BIOPHYSICOCHEMICAL PROPERTIES</scope>
</reference>
<reference key="13">
    <citation type="journal article" date="1995" name="FEMS Microbiol. Lett.">
        <title>Differential synthesis of glyceraldehyde-3-phosphate dehydrogenase polypeptides in stressed yeast cells.</title>
        <authorList>
            <person name="Boucherie H."/>
            <person name="Bataille N."/>
            <person name="Fitch I.T."/>
            <person name="Perrot M."/>
            <person name="Tuite M.F."/>
        </authorList>
    </citation>
    <scope>INDUCTION</scope>
</reference>
<reference key="14">
    <citation type="journal article" date="2001" name="Biochemistry">
        <title>Yeast mitochondrial dehydrogenases are associated in a supramolecular complex.</title>
        <authorList>
            <person name="Grandier-Vazeille X."/>
            <person name="Bathany K."/>
            <person name="Chaignepain S."/>
            <person name="Camougrand N."/>
            <person name="Manon S."/>
            <person name="Schmitter J.-M."/>
        </authorList>
    </citation>
    <scope>SUBCELLULAR LOCATION</scope>
</reference>
<reference key="15">
    <citation type="journal article" date="2003" name="Nature">
        <title>Global analysis of protein expression in yeast.</title>
        <authorList>
            <person name="Ghaemmaghami S."/>
            <person name="Huh W.-K."/>
            <person name="Bower K."/>
            <person name="Howson R.W."/>
            <person name="Belle A."/>
            <person name="Dephoure N."/>
            <person name="O'Shea E.K."/>
            <person name="Weissman J.S."/>
        </authorList>
    </citation>
    <scope>LEVEL OF PROTEIN EXPRESSION [LARGE SCALE ANALYSIS]</scope>
</reference>
<reference key="16">
    <citation type="journal article" date="2006" name="J. Proteome Res.">
        <title>Toward the complete yeast mitochondrial proteome: multidimensional separation techniques for mitochondrial proteomics.</title>
        <authorList>
            <person name="Reinders J."/>
            <person name="Zahedi R.P."/>
            <person name="Pfanner N."/>
            <person name="Meisinger C."/>
            <person name="Sickmann A."/>
        </authorList>
    </citation>
    <scope>SUBCELLULAR LOCATION [LARGE SCALE ANALYSIS]</scope>
    <scope>IDENTIFICATION BY MASS SPECTROMETRY</scope>
</reference>
<reference key="17">
    <citation type="journal article" date="2007" name="Proc. Natl. Acad. Sci. U.S.A.">
        <title>Analysis of phosphorylation sites on proteins from Saccharomyces cerevisiae by electron transfer dissociation (ETD) mass spectrometry.</title>
        <authorList>
            <person name="Chi A."/>
            <person name="Huttenhower C."/>
            <person name="Geer L.Y."/>
            <person name="Coon J.J."/>
            <person name="Syka J.E.P."/>
            <person name="Bai D.L."/>
            <person name="Shabanowitz J."/>
            <person name="Burke D.J."/>
            <person name="Troyanskaya O.G."/>
            <person name="Hunt D.F."/>
        </authorList>
    </citation>
    <scope>IDENTIFICATION BY MASS SPECTROMETRY [LARGE SCALE ANALYSIS]</scope>
</reference>
<reference key="18">
    <citation type="journal article" date="2008" name="Mol. Cell. Proteomics">
        <title>A multidimensional chromatography technology for in-depth phosphoproteome analysis.</title>
        <authorList>
            <person name="Albuquerque C.P."/>
            <person name="Smolka M.B."/>
            <person name="Payne S.H."/>
            <person name="Bafna V."/>
            <person name="Eng J."/>
            <person name="Zhou H."/>
        </authorList>
    </citation>
    <scope>PHOSPHORYLATION [LARGE SCALE ANALYSIS] AT SER-302</scope>
    <scope>IDENTIFICATION BY MASS SPECTROMETRY [LARGE SCALE ANALYSIS]</scope>
</reference>
<reference key="19">
    <citation type="journal article" date="2009" name="Science">
        <title>Global analysis of Cdk1 substrate phosphorylation sites provides insights into evolution.</title>
        <authorList>
            <person name="Holt L.J."/>
            <person name="Tuch B.B."/>
            <person name="Villen J."/>
            <person name="Johnson A.D."/>
            <person name="Gygi S.P."/>
            <person name="Morgan D.O."/>
        </authorList>
    </citation>
    <scope>IDENTIFICATION BY MASS SPECTROMETRY [LARGE SCALE ANALYSIS]</scope>
</reference>
<reference key="20">
    <citation type="journal article" date="2012" name="Proteomics">
        <title>Sites of ubiquitin attachment in Saccharomyces cerevisiae.</title>
        <authorList>
            <person name="Starita L.M."/>
            <person name="Lo R.S."/>
            <person name="Eng J.K."/>
            <person name="von Haller P.D."/>
            <person name="Fields S."/>
        </authorList>
    </citation>
    <scope>UBIQUITINATION [LARGE SCALE ANALYSIS] AT LYS-46 AND LYS-63</scope>
    <scope>IDENTIFICATION BY MASS SPECTROMETRY [LARGE SCALE ANALYSIS]</scope>
</reference>
<reference key="21">
    <citation type="journal article" date="2022" name="EMBO J.">
        <title>E2/E3-independent ubiquitin-like protein conjugation by Urm1 is directly coupled to cysteine persulfidation.</title>
        <authorList>
            <person name="Ravichandran K.E."/>
            <person name="Kaduhr L."/>
            <person name="Skupien-Rabian B."/>
            <person name="Shvetsova E."/>
            <person name="Sokolowski M."/>
            <person name="Krutyholowa R."/>
            <person name="Kwasna D."/>
            <person name="Brachmann C."/>
            <person name="Lin S."/>
            <person name="Guzman Perez S."/>
            <person name="Wilk P."/>
            <person name="Koesters M."/>
            <person name="Grudnik P."/>
            <person name="Jankowska U."/>
            <person name="Leidel S.A."/>
            <person name="Schaffrath R."/>
            <person name="Glatt S."/>
        </authorList>
    </citation>
    <scope>SULFHYDRATION AT CYS-150 AND CYS-154</scope>
    <scope>URMYLATION AT LYS-160 AND LYS-307</scope>
</reference>
<reference evidence="19" key="22">
    <citation type="submission" date="2010-12" db="PDB data bank">
        <title>Structure of GAPDH 3 from S.cerevisiae at 2.0 A resolution.</title>
        <authorList>
            <person name="Garcia-Saez I."/>
            <person name="Kozielski F."/>
            <person name="Job D."/>
            <person name="Boscheron C."/>
        </authorList>
    </citation>
    <scope>X-RAY CRYSTALLOGRAPHY (2.00 ANGSTROMS) IN COMPLEX WITH NAD(+)</scope>
</reference>
<reference evidence="20" key="23">
    <citation type="journal article" date="2012" name="Acta Crystallogr. F">
        <title>Preliminary crystallographic analysis of glyceraldehyde-3-phosphate dehydrogenase 3 from Saccharomyces cerevisiae.</title>
        <authorList>
            <person name="Liu Q."/>
            <person name="Wang H."/>
            <person name="Liu H."/>
            <person name="Teng M."/>
            <person name="Li X."/>
        </authorList>
    </citation>
    <scope>X-RAY CRYSTALLOGRAPHY (2.49 ANGSTROMS)</scope>
    <scope>SUBUNIT</scope>
</reference>
<dbReference type="EC" id="1.2.1.12" evidence="12"/>
<dbReference type="EMBL" id="V01300">
    <property type="protein sequence ID" value="CAA24607.1"/>
    <property type="molecule type" value="Genomic_DNA"/>
</dbReference>
<dbReference type="EMBL" id="J01324">
    <property type="protein sequence ID" value="AAA88714.1"/>
    <property type="molecule type" value="Genomic_DNA"/>
</dbReference>
<dbReference type="EMBL" id="X82408">
    <property type="protein sequence ID" value="CAA57803.1"/>
    <property type="molecule type" value="Genomic_DNA"/>
</dbReference>
<dbReference type="EMBL" id="Z72977">
    <property type="protein sequence ID" value="CAA97218.1"/>
    <property type="molecule type" value="Genomic_DNA"/>
</dbReference>
<dbReference type="EMBL" id="AY557831">
    <property type="protein sequence ID" value="AAS56157.1"/>
    <property type="molecule type" value="Genomic_DNA"/>
</dbReference>
<dbReference type="EMBL" id="BK006941">
    <property type="protein sequence ID" value="DAA08285.1"/>
    <property type="molecule type" value="Genomic_DNA"/>
</dbReference>
<dbReference type="PIR" id="S55870">
    <property type="entry name" value="DEBYG2"/>
</dbReference>
<dbReference type="RefSeq" id="NP_011708.3">
    <property type="nucleotide sequence ID" value="NM_001181321.3"/>
</dbReference>
<dbReference type="PDB" id="3PYM">
    <property type="method" value="X-ray"/>
    <property type="resolution" value="2.00 A"/>
    <property type="chains" value="A/B=1-332"/>
</dbReference>
<dbReference type="PDB" id="4IQ8">
    <property type="method" value="X-ray"/>
    <property type="resolution" value="2.49 A"/>
    <property type="chains" value="A=1-332"/>
</dbReference>
<dbReference type="PDBsum" id="3PYM"/>
<dbReference type="PDBsum" id="4IQ8"/>
<dbReference type="SMR" id="P00359"/>
<dbReference type="BioGRID" id="33445">
    <property type="interactions" value="341"/>
</dbReference>
<dbReference type="DIP" id="DIP-4309N"/>
<dbReference type="FunCoup" id="P00359">
    <property type="interactions" value="1202"/>
</dbReference>
<dbReference type="IntAct" id="P00359">
    <property type="interactions" value="121"/>
</dbReference>
<dbReference type="MINT" id="P00359"/>
<dbReference type="STRING" id="4932.YGR192C"/>
<dbReference type="MoonDB" id="P00359">
    <property type="type" value="Curated"/>
</dbReference>
<dbReference type="MoonProt" id="P00359"/>
<dbReference type="CarbonylDB" id="P00359"/>
<dbReference type="iPTMnet" id="P00359"/>
<dbReference type="PaxDb" id="4932-YGR192C"/>
<dbReference type="PeptideAtlas" id="P00359"/>
<dbReference type="TopDownProteomics" id="P00359"/>
<dbReference type="EnsemblFungi" id="YGR192C_mRNA">
    <property type="protein sequence ID" value="YGR192C"/>
    <property type="gene ID" value="YGR192C"/>
</dbReference>
<dbReference type="GeneID" id="853106"/>
<dbReference type="KEGG" id="sce:YGR192C"/>
<dbReference type="AGR" id="SGD:S000003424"/>
<dbReference type="SGD" id="S000003424">
    <property type="gene designation" value="TDH3"/>
</dbReference>
<dbReference type="VEuPathDB" id="FungiDB:YGR192C"/>
<dbReference type="eggNOG" id="KOG0657">
    <property type="taxonomic scope" value="Eukaryota"/>
</dbReference>
<dbReference type="GeneTree" id="ENSGT00940000153298"/>
<dbReference type="HOGENOM" id="CLU_030140_0_3_1"/>
<dbReference type="InParanoid" id="P00359"/>
<dbReference type="OMA" id="YGYTCNM"/>
<dbReference type="OrthoDB" id="1152826at2759"/>
<dbReference type="BioCyc" id="YEAST:YGR192C-MONOMER"/>
<dbReference type="BRENDA" id="1.2.1.12">
    <property type="organism ID" value="984"/>
</dbReference>
<dbReference type="Reactome" id="R-SCE-70171">
    <property type="pathway name" value="Glycolysis"/>
</dbReference>
<dbReference type="Reactome" id="R-SCE-70263">
    <property type="pathway name" value="Gluconeogenesis"/>
</dbReference>
<dbReference type="SABIO-RK" id="P00359"/>
<dbReference type="UniPathway" id="UPA00109">
    <property type="reaction ID" value="UER00184"/>
</dbReference>
<dbReference type="BioGRID-ORCS" id="853106">
    <property type="hits" value="2 hits in 10 CRISPR screens"/>
</dbReference>
<dbReference type="EvolutionaryTrace" id="P00359"/>
<dbReference type="PRO" id="PR:P00359"/>
<dbReference type="Proteomes" id="UP000002311">
    <property type="component" value="Chromosome VII"/>
</dbReference>
<dbReference type="RNAct" id="P00359">
    <property type="molecule type" value="protein"/>
</dbReference>
<dbReference type="GO" id="GO:0005737">
    <property type="term" value="C:cytoplasm"/>
    <property type="evidence" value="ECO:0007005"/>
    <property type="project" value="SGD"/>
</dbReference>
<dbReference type="GO" id="GO:0005829">
    <property type="term" value="C:cytosol"/>
    <property type="evidence" value="ECO:0000314"/>
    <property type="project" value="SGD"/>
</dbReference>
<dbReference type="GO" id="GO:0009277">
    <property type="term" value="C:fungal-type cell wall"/>
    <property type="evidence" value="ECO:0000314"/>
    <property type="project" value="SGD"/>
</dbReference>
<dbReference type="GO" id="GO:0005811">
    <property type="term" value="C:lipid droplet"/>
    <property type="evidence" value="ECO:0000314"/>
    <property type="project" value="SGD"/>
</dbReference>
<dbReference type="GO" id="GO:0005739">
    <property type="term" value="C:mitochondrion"/>
    <property type="evidence" value="ECO:0000314"/>
    <property type="project" value="SGD"/>
</dbReference>
<dbReference type="GO" id="GO:0005634">
    <property type="term" value="C:nucleus"/>
    <property type="evidence" value="ECO:0007005"/>
    <property type="project" value="SGD"/>
</dbReference>
<dbReference type="GO" id="GO:0005886">
    <property type="term" value="C:plasma membrane"/>
    <property type="evidence" value="ECO:0007005"/>
    <property type="project" value="SGD"/>
</dbReference>
<dbReference type="GO" id="GO:0004365">
    <property type="term" value="F:glyceraldehyde-3-phosphate dehydrogenase (NAD+) (phosphorylating) activity"/>
    <property type="evidence" value="ECO:0000314"/>
    <property type="project" value="SGD"/>
</dbReference>
<dbReference type="GO" id="GO:0020037">
    <property type="term" value="F:heme binding"/>
    <property type="evidence" value="ECO:0000315"/>
    <property type="project" value="SGD"/>
</dbReference>
<dbReference type="GO" id="GO:1904408">
    <property type="term" value="F:melatonin binding"/>
    <property type="evidence" value="ECO:0000314"/>
    <property type="project" value="SGD"/>
</dbReference>
<dbReference type="GO" id="GO:0003729">
    <property type="term" value="F:mRNA binding"/>
    <property type="evidence" value="ECO:0000314"/>
    <property type="project" value="SGD"/>
</dbReference>
<dbReference type="GO" id="GO:0051287">
    <property type="term" value="F:NAD binding"/>
    <property type="evidence" value="ECO:0007669"/>
    <property type="project" value="InterPro"/>
</dbReference>
<dbReference type="GO" id="GO:0050661">
    <property type="term" value="F:NADP binding"/>
    <property type="evidence" value="ECO:0007669"/>
    <property type="project" value="InterPro"/>
</dbReference>
<dbReference type="GO" id="GO:0003723">
    <property type="term" value="F:RNA binding"/>
    <property type="evidence" value="ECO:0000314"/>
    <property type="project" value="SGD"/>
</dbReference>
<dbReference type="GO" id="GO:0006915">
    <property type="term" value="P:apoptotic process"/>
    <property type="evidence" value="ECO:0000315"/>
    <property type="project" value="SGD"/>
</dbReference>
<dbReference type="GO" id="GO:0006094">
    <property type="term" value="P:gluconeogenesis"/>
    <property type="evidence" value="ECO:0000270"/>
    <property type="project" value="SGD"/>
</dbReference>
<dbReference type="GO" id="GO:0006096">
    <property type="term" value="P:glycolytic process"/>
    <property type="evidence" value="ECO:0000270"/>
    <property type="project" value="SGD"/>
</dbReference>
<dbReference type="GO" id="GO:0015886">
    <property type="term" value="P:heme transport"/>
    <property type="evidence" value="ECO:0000315"/>
    <property type="project" value="SGD"/>
</dbReference>
<dbReference type="GO" id="GO:0072593">
    <property type="term" value="P:reactive oxygen species metabolic process"/>
    <property type="evidence" value="ECO:0000315"/>
    <property type="project" value="SGD"/>
</dbReference>
<dbReference type="CDD" id="cd18126">
    <property type="entry name" value="GAPDH_I_C"/>
    <property type="match status" value="1"/>
</dbReference>
<dbReference type="CDD" id="cd05214">
    <property type="entry name" value="GAPDH_I_N"/>
    <property type="match status" value="1"/>
</dbReference>
<dbReference type="FunFam" id="3.30.360.10:FF:000001">
    <property type="entry name" value="Glyceraldehyde-3-phosphate dehydrogenase"/>
    <property type="match status" value="1"/>
</dbReference>
<dbReference type="FunFam" id="3.40.50.720:FF:000020">
    <property type="entry name" value="Glyceraldehyde-3-phosphate dehydrogenase"/>
    <property type="match status" value="1"/>
</dbReference>
<dbReference type="Gene3D" id="3.30.360.10">
    <property type="entry name" value="Dihydrodipicolinate Reductase, domain 2"/>
    <property type="match status" value="1"/>
</dbReference>
<dbReference type="Gene3D" id="3.40.50.720">
    <property type="entry name" value="NAD(P)-binding Rossmann-like Domain"/>
    <property type="match status" value="1"/>
</dbReference>
<dbReference type="InterPro" id="IPR020831">
    <property type="entry name" value="GlycerAld/Erythrose_P_DH"/>
</dbReference>
<dbReference type="InterPro" id="IPR020830">
    <property type="entry name" value="GlycerAld_3-P_DH_AS"/>
</dbReference>
<dbReference type="InterPro" id="IPR020829">
    <property type="entry name" value="GlycerAld_3-P_DH_cat"/>
</dbReference>
<dbReference type="InterPro" id="IPR020828">
    <property type="entry name" value="GlycerAld_3-P_DH_NAD(P)-bd"/>
</dbReference>
<dbReference type="InterPro" id="IPR006424">
    <property type="entry name" value="Glyceraldehyde-3-P_DH_1"/>
</dbReference>
<dbReference type="InterPro" id="IPR036291">
    <property type="entry name" value="NAD(P)-bd_dom_sf"/>
</dbReference>
<dbReference type="NCBIfam" id="TIGR01534">
    <property type="entry name" value="GAPDH-I"/>
    <property type="match status" value="1"/>
</dbReference>
<dbReference type="PANTHER" id="PTHR10836">
    <property type="entry name" value="GLYCERALDEHYDE 3-PHOSPHATE DEHYDROGENASE"/>
    <property type="match status" value="1"/>
</dbReference>
<dbReference type="PANTHER" id="PTHR10836:SF76">
    <property type="entry name" value="GLYCERALDEHYDE-3-PHOSPHATE DEHYDROGENASE-RELATED"/>
    <property type="match status" value="1"/>
</dbReference>
<dbReference type="Pfam" id="PF02800">
    <property type="entry name" value="Gp_dh_C"/>
    <property type="match status" value="1"/>
</dbReference>
<dbReference type="Pfam" id="PF00044">
    <property type="entry name" value="Gp_dh_N"/>
    <property type="match status" value="1"/>
</dbReference>
<dbReference type="PIRSF" id="PIRSF000149">
    <property type="entry name" value="GAP_DH"/>
    <property type="match status" value="1"/>
</dbReference>
<dbReference type="PRINTS" id="PR00078">
    <property type="entry name" value="G3PDHDRGNASE"/>
</dbReference>
<dbReference type="SMART" id="SM00846">
    <property type="entry name" value="Gp_dh_N"/>
    <property type="match status" value="1"/>
</dbReference>
<dbReference type="SUPFAM" id="SSF55347">
    <property type="entry name" value="Glyceraldehyde-3-phosphate dehydrogenase-like, C-terminal domain"/>
    <property type="match status" value="1"/>
</dbReference>
<dbReference type="SUPFAM" id="SSF51735">
    <property type="entry name" value="NAD(P)-binding Rossmann-fold domains"/>
    <property type="match status" value="1"/>
</dbReference>
<dbReference type="PROSITE" id="PS00071">
    <property type="entry name" value="GAPDH"/>
    <property type="match status" value="1"/>
</dbReference>
<gene>
    <name evidence="15" type="primary">TDH3</name>
    <name type="synonym">GPD3</name>
    <name type="ordered locus">YGR192C</name>
    <name type="ORF">G7576</name>
</gene>
<feature type="initiator methionine" description="Removed" evidence="5">
    <location>
        <position position="1"/>
    </location>
</feature>
<feature type="chain" id="PRO_0000145591" description="Glyceraldehyde-3-phosphate dehydrogenase 3">
    <location>
        <begin position="2"/>
        <end position="332"/>
    </location>
</feature>
<feature type="active site" description="Nucleophile" evidence="3">
    <location>
        <position position="150"/>
    </location>
</feature>
<feature type="binding site" evidence="19">
    <location>
        <position position="11"/>
    </location>
    <ligand>
        <name>NAD(+)</name>
        <dbReference type="ChEBI" id="CHEBI:57540"/>
    </ligand>
</feature>
<feature type="binding site" evidence="19">
    <location>
        <position position="12"/>
    </location>
    <ligand>
        <name>NAD(+)</name>
        <dbReference type="ChEBI" id="CHEBI:57540"/>
    </ligand>
</feature>
<feature type="binding site" evidence="19">
    <location>
        <position position="33"/>
    </location>
    <ligand>
        <name>NAD(+)</name>
        <dbReference type="ChEBI" id="CHEBI:57540"/>
    </ligand>
</feature>
<feature type="binding site" evidence="19">
    <location>
        <position position="120"/>
    </location>
    <ligand>
        <name>NAD(+)</name>
        <dbReference type="ChEBI" id="CHEBI:57540"/>
    </ligand>
</feature>
<feature type="binding site" evidence="2">
    <location>
        <begin position="149"/>
        <end position="151"/>
    </location>
    <ligand>
        <name>D-glyceraldehyde 3-phosphate</name>
        <dbReference type="ChEBI" id="CHEBI:59776"/>
    </ligand>
</feature>
<feature type="binding site" evidence="2">
    <location>
        <position position="180"/>
    </location>
    <ligand>
        <name>D-glyceraldehyde 3-phosphate</name>
        <dbReference type="ChEBI" id="CHEBI:59776"/>
    </ligand>
</feature>
<feature type="binding site" evidence="2">
    <location>
        <begin position="209"/>
        <end position="210"/>
    </location>
    <ligand>
        <name>D-glyceraldehyde 3-phosphate</name>
        <dbReference type="ChEBI" id="CHEBI:59776"/>
    </ligand>
</feature>
<feature type="binding site" evidence="2">
    <location>
        <position position="232"/>
    </location>
    <ligand>
        <name>D-glyceraldehyde 3-phosphate</name>
        <dbReference type="ChEBI" id="CHEBI:59776"/>
    </ligand>
</feature>
<feature type="binding site" evidence="19">
    <location>
        <position position="314"/>
    </location>
    <ligand>
        <name>NAD(+)</name>
        <dbReference type="ChEBI" id="CHEBI:57540"/>
    </ligand>
</feature>
<feature type="binding site" evidence="19">
    <location>
        <position position="318"/>
    </location>
    <ligand>
        <name>NAD(+)</name>
        <dbReference type="ChEBI" id="CHEBI:57540"/>
    </ligand>
</feature>
<feature type="site" description="Activates thiol group during catalysis" evidence="1">
    <location>
        <position position="177"/>
    </location>
</feature>
<feature type="modified residue" description="Cysteine persulfide" evidence="11">
    <location>
        <position position="150"/>
    </location>
</feature>
<feature type="modified residue" description="Cysteine persulfide" evidence="11">
    <location>
        <position position="154"/>
    </location>
</feature>
<feature type="modified residue" description="Phosphoserine" evidence="21">
    <location>
        <position position="302"/>
    </location>
</feature>
<feature type="cross-link" description="Glycyl lysine isopeptide (Lys-Gly) (interchain with G-Cter in ubiquitin)" evidence="22">
    <location>
        <position position="46"/>
    </location>
</feature>
<feature type="cross-link" description="Glycyl lysine isopeptide (Lys-Gly) (interchain with G-Cter in ubiquitin)" evidence="22">
    <location>
        <position position="63"/>
    </location>
</feature>
<feature type="cross-link" description="Glycyl lysine isopeptide (Lys-Gly) (interchain with G-Cter in URM1)" evidence="11">
    <location>
        <position position="160"/>
    </location>
</feature>
<feature type="cross-link" description="Glycyl lysine isopeptide (Lys-Gly) (interchain with G-Cter in URM1)" evidence="11">
    <location>
        <position position="307"/>
    </location>
</feature>
<feature type="sequence conflict" description="In Ref. 1; CAA24607/AAA88714." evidence="17" ref="1">
    <original>E</original>
    <variation>V</variation>
    <location>
        <position position="136"/>
    </location>
</feature>
<feature type="sequence conflict" description="In Ref. 1; CAA24607/AAA88714." evidence="17" ref="1">
    <original>N</original>
    <variation>D</variation>
    <location>
        <position position="248"/>
    </location>
</feature>
<feature type="sequence conflict" description="In Ref. 5; AAS56157." evidence="17" ref="5">
    <original>D</original>
    <variation>G</variation>
    <location>
        <position position="287"/>
    </location>
</feature>
<feature type="sequence conflict" description="In Ref. 1; CAA24607/AAA88714." evidence="17" ref="1">
    <original>V</original>
    <variation>I</variation>
    <location>
        <position position="329"/>
    </location>
</feature>
<feature type="strand" evidence="23">
    <location>
        <begin position="3"/>
        <end position="7"/>
    </location>
</feature>
<feature type="helix" evidence="23">
    <location>
        <begin position="11"/>
        <end position="22"/>
    </location>
</feature>
<feature type="strand" evidence="23">
    <location>
        <begin position="27"/>
        <end position="32"/>
    </location>
</feature>
<feature type="helix" evidence="23">
    <location>
        <begin position="38"/>
        <end position="46"/>
    </location>
</feature>
<feature type="turn" evidence="23">
    <location>
        <begin position="49"/>
        <end position="51"/>
    </location>
</feature>
<feature type="strand" evidence="23">
    <location>
        <begin position="58"/>
        <end position="60"/>
    </location>
</feature>
<feature type="strand" evidence="23">
    <location>
        <begin position="62"/>
        <end position="67"/>
    </location>
</feature>
<feature type="strand" evidence="23">
    <location>
        <begin position="70"/>
        <end position="75"/>
    </location>
</feature>
<feature type="helix" evidence="23">
    <location>
        <begin position="80"/>
        <end position="82"/>
    </location>
</feature>
<feature type="turn" evidence="23">
    <location>
        <begin position="85"/>
        <end position="89"/>
    </location>
</feature>
<feature type="strand" evidence="23">
    <location>
        <begin position="91"/>
        <end position="95"/>
    </location>
</feature>
<feature type="strand" evidence="23">
    <location>
        <begin position="97"/>
        <end position="100"/>
    </location>
</feature>
<feature type="helix" evidence="23">
    <location>
        <begin position="103"/>
        <end position="111"/>
    </location>
</feature>
<feature type="strand" evidence="23">
    <location>
        <begin position="115"/>
        <end position="121"/>
    </location>
</feature>
<feature type="strand" evidence="23">
    <location>
        <begin position="124"/>
        <end position="126"/>
    </location>
</feature>
<feature type="turn" evidence="23">
    <location>
        <begin position="131"/>
        <end position="133"/>
    </location>
</feature>
<feature type="helix" evidence="23">
    <location>
        <begin position="135"/>
        <end position="137"/>
    </location>
</feature>
<feature type="strand" evidence="23">
    <location>
        <begin position="144"/>
        <end position="146"/>
    </location>
</feature>
<feature type="helix" evidence="23">
    <location>
        <begin position="150"/>
        <end position="166"/>
    </location>
</feature>
<feature type="strand" evidence="23">
    <location>
        <begin position="168"/>
        <end position="178"/>
    </location>
</feature>
<feature type="strand" evidence="23">
    <location>
        <begin position="183"/>
        <end position="187"/>
    </location>
</feature>
<feature type="helix" evidence="23">
    <location>
        <begin position="195"/>
        <end position="197"/>
    </location>
</feature>
<feature type="helix" evidence="23">
    <location>
        <begin position="200"/>
        <end position="202"/>
    </location>
</feature>
<feature type="strand" evidence="23">
    <location>
        <begin position="205"/>
        <end position="208"/>
    </location>
</feature>
<feature type="helix" evidence="23">
    <location>
        <begin position="211"/>
        <end position="218"/>
    </location>
</feature>
<feature type="helix" evidence="23">
    <location>
        <begin position="220"/>
        <end position="222"/>
    </location>
</feature>
<feature type="strand" evidence="23">
    <location>
        <begin position="225"/>
        <end position="234"/>
    </location>
</feature>
<feature type="strand" evidence="23">
    <location>
        <begin position="239"/>
        <end position="249"/>
    </location>
</feature>
<feature type="helix" evidence="23">
    <location>
        <begin position="253"/>
        <end position="265"/>
    </location>
</feature>
<feature type="turn" evidence="23">
    <location>
        <begin position="266"/>
        <end position="271"/>
    </location>
</feature>
<feature type="strand" evidence="23">
    <location>
        <begin position="272"/>
        <end position="275"/>
    </location>
</feature>
<feature type="helix" evidence="23">
    <location>
        <begin position="281"/>
        <end position="284"/>
    </location>
</feature>
<feature type="strand" evidence="23">
    <location>
        <begin position="290"/>
        <end position="294"/>
    </location>
</feature>
<feature type="helix" evidence="23">
    <location>
        <begin position="295"/>
        <end position="297"/>
    </location>
</feature>
<feature type="strand" evidence="23">
    <location>
        <begin position="299"/>
        <end position="302"/>
    </location>
</feature>
<feature type="strand" evidence="23">
    <location>
        <begin position="305"/>
        <end position="312"/>
    </location>
</feature>
<feature type="helix" evidence="23">
    <location>
        <begin position="316"/>
        <end position="331"/>
    </location>
</feature>
<evidence type="ECO:0000250" key="1">
    <source>
        <dbReference type="UniProtKB" id="P04406"/>
    </source>
</evidence>
<evidence type="ECO:0000250" key="2">
    <source>
        <dbReference type="UniProtKB" id="P22513"/>
    </source>
</evidence>
<evidence type="ECO:0000255" key="3">
    <source>
        <dbReference type="PROSITE-ProRule" id="PRU10009"/>
    </source>
</evidence>
<evidence type="ECO:0000269" key="4">
    <source>
    </source>
</evidence>
<evidence type="ECO:0000269" key="5">
    <source>
    </source>
</evidence>
<evidence type="ECO:0000269" key="6">
    <source>
    </source>
</evidence>
<evidence type="ECO:0000269" key="7">
    <source>
    </source>
</evidence>
<evidence type="ECO:0000269" key="8">
    <source>
    </source>
</evidence>
<evidence type="ECO:0000269" key="9">
    <source>
    </source>
</evidence>
<evidence type="ECO:0000269" key="10">
    <source>
    </source>
</evidence>
<evidence type="ECO:0000269" key="11">
    <source>
    </source>
</evidence>
<evidence type="ECO:0000269" key="12">
    <source>
    </source>
</evidence>
<evidence type="ECO:0000269" key="13">
    <source>
    </source>
</evidence>
<evidence type="ECO:0000269" key="14">
    <source>
    </source>
</evidence>
<evidence type="ECO:0000303" key="15">
    <source>
    </source>
</evidence>
<evidence type="ECO:0000303" key="16">
    <source>
    </source>
</evidence>
<evidence type="ECO:0000305" key="17"/>
<evidence type="ECO:0000305" key="18">
    <source>
    </source>
</evidence>
<evidence type="ECO:0007744" key="19">
    <source>
        <dbReference type="PDB" id="3PYM"/>
    </source>
</evidence>
<evidence type="ECO:0007744" key="20">
    <source>
        <dbReference type="PDB" id="4IQ8"/>
    </source>
</evidence>
<evidence type="ECO:0007744" key="21">
    <source>
    </source>
</evidence>
<evidence type="ECO:0007744" key="22">
    <source>
    </source>
</evidence>
<evidence type="ECO:0007829" key="23">
    <source>
        <dbReference type="PDB" id="3PYM"/>
    </source>
</evidence>
<accession>P00359</accession>
<accession>D6VUX4</accession>
<accession>Q6Q5P9</accession>
<protein>
    <recommendedName>
        <fullName evidence="15">Glyceraldehyde-3-phosphate dehydrogenase 3</fullName>
        <shortName evidence="15">GAPDH 3</shortName>
        <ecNumber evidence="12">1.2.1.12</ecNumber>
    </recommendedName>
    <alternativeName>
        <fullName evidence="15">Triose-phosphate dehydrogenase 1</fullName>
    </alternativeName>
</protein>